<protein>
    <recommendedName>
        <fullName>Arsenate-mycothiol transferase ArsC2</fullName>
        <ecNumber>2.8.4.2</ecNumber>
    </recommendedName>
    <alternativeName>
        <fullName>Mycothiol-dependent arsenate reductase ArsC2</fullName>
    </alternativeName>
</protein>
<organism>
    <name type="scientific">Corynebacterium glutamicum (strain ATCC 13032 / DSM 20300 / JCM 1318 / BCRC 11384 / CCUG 27702 / LMG 3730 / NBRC 12168 / NCIMB 10025 / NRRL B-2784 / 534)</name>
    <dbReference type="NCBI Taxonomy" id="196627"/>
    <lineage>
        <taxon>Bacteria</taxon>
        <taxon>Bacillati</taxon>
        <taxon>Actinomycetota</taxon>
        <taxon>Actinomycetes</taxon>
        <taxon>Mycobacteriales</taxon>
        <taxon>Corynebacteriaceae</taxon>
        <taxon>Corynebacterium</taxon>
    </lineage>
</organism>
<proteinExistence type="evidence at protein level"/>
<name>ARSC2_CORGL</name>
<sequence>MKSVLFVCVGNGGKSQMAAALAQKYASDSVEIHSAGTKPAQGLNQLSVESIAEVGADMSQGIPKAIDPELLRTVDRVVILGDDAQVDMPESAQGALERWSIEEPDAQGMERMRIVRDQIDNRVQALLAG</sequence>
<keyword id="KW-0002">3D-structure</keyword>
<keyword id="KW-0059">Arsenical resistance</keyword>
<keyword id="KW-0963">Cytoplasm</keyword>
<keyword id="KW-1185">Reference proteome</keyword>
<keyword id="KW-0808">Transferase</keyword>
<evidence type="ECO:0000269" key="1">
    <source>
    </source>
</evidence>
<evidence type="ECO:0000269" key="2">
    <source>
    </source>
</evidence>
<evidence type="ECO:0000305" key="3"/>
<evidence type="ECO:0007829" key="4">
    <source>
        <dbReference type="PDB" id="3RH0"/>
    </source>
</evidence>
<comment type="function">
    <text evidence="2">Involved in defense against toxic arsenate. Involved in the mycothiol/myoredoxin redox pathway which uses a mycothioltransferase mechanism; facilitates adduct formation between arsenate and mycothiol.</text>
</comment>
<comment type="catalytic activity">
    <reaction evidence="2">
        <text>mycothiol + arsenate = arseno-mycothiol + H2O</text>
        <dbReference type="Rhea" id="RHEA:27349"/>
        <dbReference type="ChEBI" id="CHEBI:15377"/>
        <dbReference type="ChEBI" id="CHEBI:16768"/>
        <dbReference type="ChEBI" id="CHEBI:48597"/>
        <dbReference type="ChEBI" id="CHEBI:59655"/>
        <dbReference type="EC" id="2.8.4.2"/>
    </reaction>
</comment>
<comment type="biophysicochemical properties">
    <kinetics>
        <KM evidence="2">142 mM for arsenate in the presence of mycoredoxin 1, mycothiol, mycothione reductase and NADPH</KM>
    </kinetics>
</comment>
<comment type="subcellular location">
    <subcellularLocation>
        <location evidence="3">Cytoplasm</location>
    </subcellularLocation>
</comment>
<comment type="induction">
    <text evidence="1">By arsenite.</text>
</comment>
<comment type="similarity">
    <text evidence="3">Belongs to the low molecular weight phosphotyrosine protein phosphatase family.</text>
</comment>
<dbReference type="EC" id="2.8.4.2"/>
<dbReference type="EMBL" id="BA000036">
    <property type="protein sequence ID" value="BAB97656.1"/>
    <property type="molecule type" value="Genomic_DNA"/>
</dbReference>
<dbReference type="EMBL" id="BX927148">
    <property type="protein sequence ID" value="CAF18834.1"/>
    <property type="molecule type" value="Genomic_DNA"/>
</dbReference>
<dbReference type="RefSeq" id="NP_599516.1">
    <property type="nucleotide sequence ID" value="NC_003450.3"/>
</dbReference>
<dbReference type="RefSeq" id="WP_003863342.1">
    <property type="nucleotide sequence ID" value="NC_006958.1"/>
</dbReference>
<dbReference type="PDB" id="3RH0">
    <property type="method" value="X-ray"/>
    <property type="resolution" value="1.72 A"/>
    <property type="chains" value="A/B=1-129"/>
</dbReference>
<dbReference type="PDBsum" id="3RH0"/>
<dbReference type="SMR" id="P0DKS7"/>
<dbReference type="STRING" id="196627.cg0319"/>
<dbReference type="KEGG" id="cgb:cg0319"/>
<dbReference type="KEGG" id="cgl:Cgl0263"/>
<dbReference type="PATRIC" id="fig|196627.13.peg.267"/>
<dbReference type="eggNOG" id="COG0394">
    <property type="taxonomic scope" value="Bacteria"/>
</dbReference>
<dbReference type="HOGENOM" id="CLU_071415_3_3_11"/>
<dbReference type="OrthoDB" id="9799372at2"/>
<dbReference type="BioCyc" id="CORYNE:G18NG-11093-MONOMER"/>
<dbReference type="BRENDA" id="2.8.4.2">
    <property type="organism ID" value="960"/>
</dbReference>
<dbReference type="SABIO-RK" id="P0DKS7"/>
<dbReference type="EvolutionaryTrace" id="P0DKS7"/>
<dbReference type="Proteomes" id="UP000000582">
    <property type="component" value="Chromosome"/>
</dbReference>
<dbReference type="Proteomes" id="UP000001009">
    <property type="component" value="Chromosome"/>
</dbReference>
<dbReference type="GO" id="GO:0005737">
    <property type="term" value="C:cytoplasm"/>
    <property type="evidence" value="ECO:0007669"/>
    <property type="project" value="UniProtKB-SubCell"/>
</dbReference>
<dbReference type="GO" id="GO:0102100">
    <property type="term" value="F:mycothiol-arsenate ligase activity"/>
    <property type="evidence" value="ECO:0007669"/>
    <property type="project" value="UniProtKB-EC"/>
</dbReference>
<dbReference type="GO" id="GO:0046685">
    <property type="term" value="P:response to arsenic-containing substance"/>
    <property type="evidence" value="ECO:0007669"/>
    <property type="project" value="UniProtKB-KW"/>
</dbReference>
<dbReference type="Gene3D" id="3.40.50.2300">
    <property type="match status" value="1"/>
</dbReference>
<dbReference type="InterPro" id="IPR023485">
    <property type="entry name" value="Ptyr_pPase"/>
</dbReference>
<dbReference type="InterPro" id="IPR036196">
    <property type="entry name" value="Ptyr_pPase_sf"/>
</dbReference>
<dbReference type="PANTHER" id="PTHR43428">
    <property type="entry name" value="ARSENATE REDUCTASE"/>
    <property type="match status" value="1"/>
</dbReference>
<dbReference type="PANTHER" id="PTHR43428:SF1">
    <property type="entry name" value="ARSENATE REDUCTASE"/>
    <property type="match status" value="1"/>
</dbReference>
<dbReference type="Pfam" id="PF01451">
    <property type="entry name" value="LMWPc"/>
    <property type="match status" value="1"/>
</dbReference>
<dbReference type="SMART" id="SM00226">
    <property type="entry name" value="LMWPc"/>
    <property type="match status" value="1"/>
</dbReference>
<dbReference type="SUPFAM" id="SSF52788">
    <property type="entry name" value="Phosphotyrosine protein phosphatases I"/>
    <property type="match status" value="1"/>
</dbReference>
<reference key="1">
    <citation type="journal article" date="2003" name="Appl. Microbiol. Biotechnol.">
        <title>The Corynebacterium glutamicum genome: features and impacts on biotechnological processes.</title>
        <authorList>
            <person name="Ikeda M."/>
            <person name="Nakagawa S."/>
        </authorList>
    </citation>
    <scope>NUCLEOTIDE SEQUENCE [LARGE SCALE GENOMIC DNA]</scope>
    <source>
        <strain>ATCC 13032 / DSM 20300 / JCM 1318 / BCRC 11384 / CCUG 27702 / LMG 3730 / NBRC 12168 / NCIMB 10025 / NRRL B-2784 / 534</strain>
    </source>
</reference>
<reference key="2">
    <citation type="journal article" date="2003" name="J. Biotechnol.">
        <title>The complete Corynebacterium glutamicum ATCC 13032 genome sequence and its impact on the production of L-aspartate-derived amino acids and vitamins.</title>
        <authorList>
            <person name="Kalinowski J."/>
            <person name="Bathe B."/>
            <person name="Bartels D."/>
            <person name="Bischoff N."/>
            <person name="Bott M."/>
            <person name="Burkovski A."/>
            <person name="Dusch N."/>
            <person name="Eggeling L."/>
            <person name="Eikmanns B.J."/>
            <person name="Gaigalat L."/>
            <person name="Goesmann A."/>
            <person name="Hartmann M."/>
            <person name="Huthmacher K."/>
            <person name="Kraemer R."/>
            <person name="Linke B."/>
            <person name="McHardy A.C."/>
            <person name="Meyer F."/>
            <person name="Moeckel B."/>
            <person name="Pfefferle W."/>
            <person name="Puehler A."/>
            <person name="Rey D.A."/>
            <person name="Rueckert C."/>
            <person name="Rupp O."/>
            <person name="Sahm H."/>
            <person name="Wendisch V.F."/>
            <person name="Wiegraebe I."/>
            <person name="Tauch A."/>
        </authorList>
    </citation>
    <scope>NUCLEOTIDE SEQUENCE [LARGE SCALE GENOMIC DNA]</scope>
    <source>
        <strain>ATCC 13032 / DSM 20300 / JCM 1318 / BCRC 11384 / CCUG 27702 / LMG 3730 / NBRC 12168 / NCIMB 10025 / NRRL B-2784 / 534</strain>
    </source>
</reference>
<reference key="3">
    <citation type="journal article" date="2005" name="Appl. Environ. Microbiol.">
        <title>Analysis of genes involved in arsenic resistance in Corynebacterium glutamicum ATCC 13032.</title>
        <authorList>
            <person name="Ordonez E."/>
            <person name="Letek M."/>
            <person name="Valbuena N."/>
            <person name="Gil J.A."/>
            <person name="Mateos L.M."/>
        </authorList>
    </citation>
    <scope>INDUCTION</scope>
</reference>
<reference key="4">
    <citation type="journal article" date="2009" name="J. Biol. Chem.">
        <title>Arsenate reductase, mycothiol, and mycoredoxin concert thiol/disulfide exchange.</title>
        <authorList>
            <person name="Ordonez E."/>
            <person name="Van Belle K."/>
            <person name="Roos G."/>
            <person name="De Galan S."/>
            <person name="Letek M."/>
            <person name="Gil J.A."/>
            <person name="Wyns L."/>
            <person name="Mateos L.M."/>
            <person name="Messens J."/>
        </authorList>
    </citation>
    <scope>FUNCTION</scope>
    <scope>CATALYTIC ACTIVITY</scope>
    <scope>BIOPHYSICOCHEMICAL PROPERTIES</scope>
</reference>
<reference key="5">
    <citation type="journal article" date="2011" name="Mol. Microbiol.">
        <title>Corynebacterium glutamicum survives arsenic stress with arsenate reductases coupled to two distinct redox mechanisms.</title>
        <authorList>
            <person name="Villadangos A.F."/>
            <person name="Van Belle K."/>
            <person name="Wahni K."/>
            <person name="Dufe V.T."/>
            <person name="Freitas S."/>
            <person name="Nur H."/>
            <person name="De Galan S."/>
            <person name="Gil J.A."/>
            <person name="Collet J.F."/>
            <person name="Mateos L.M."/>
            <person name="Messens J."/>
        </authorList>
    </citation>
    <scope>X-RAY CRYSTALLOGRAPHY (1.72 ANGSTROMS)</scope>
</reference>
<accession>P0DKS7</accession>
<accession>Q6M898</accession>
<accession>Q8NTP3</accession>
<feature type="chain" id="PRO_0000418725" description="Arsenate-mycothiol transferase ArsC2">
    <location>
        <begin position="1"/>
        <end position="129"/>
    </location>
</feature>
<feature type="strand" evidence="4">
    <location>
        <begin position="3"/>
        <end position="13"/>
    </location>
</feature>
<feature type="helix" evidence="4">
    <location>
        <begin position="14"/>
        <end position="25"/>
    </location>
</feature>
<feature type="strand" evidence="4">
    <location>
        <begin position="30"/>
        <end position="38"/>
    </location>
</feature>
<feature type="helix" evidence="4">
    <location>
        <begin position="45"/>
        <end position="53"/>
    </location>
</feature>
<feature type="helix" evidence="4">
    <location>
        <begin position="68"/>
        <end position="73"/>
    </location>
</feature>
<feature type="strand" evidence="4">
    <location>
        <begin position="75"/>
        <end position="83"/>
    </location>
</feature>
<feature type="strand" evidence="4">
    <location>
        <begin position="94"/>
        <end position="99"/>
    </location>
</feature>
<feature type="helix" evidence="4">
    <location>
        <begin position="108"/>
        <end position="127"/>
    </location>
</feature>
<gene>
    <name type="primary">arsC2</name>
    <name type="synonym">arsX</name>
    <name type="ordered locus">cg0319</name>
    <name type="ordered locus">Cgl0263</name>
</gene>